<comment type="function">
    <text evidence="1">Pectinolytic enzymes consist of four classes of enzymes: pectin lyase, polygalacturonase, pectin methylesterase and rhamnogalacturonase. Among pectinolytic enzymes, pectin lyase is the most important in depolymerization of pectin, since it cleaves internal glycosidic bonds of highly methylated pectins (By similarity).</text>
</comment>
<comment type="catalytic activity">
    <reaction>
        <text>Eliminative cleavage of (1-&gt;4)-alpha-D-galacturonan methyl ester to give oligosaccharides with 4-deoxy-6-O-methyl-alpha-D-galact-4-enuronosyl groups at their non-reducing ends.</text>
        <dbReference type="EC" id="4.2.2.10"/>
    </reaction>
</comment>
<comment type="subcellular location">
    <subcellularLocation>
        <location evidence="1">Secreted</location>
    </subcellularLocation>
</comment>
<comment type="similarity">
    <text evidence="3">Belongs to the polysaccharide lyase 1 family.</text>
</comment>
<proteinExistence type="inferred from homology"/>
<gene>
    <name type="primary">pelA</name>
    <name type="ORF">An14g04370</name>
</gene>
<feature type="signal peptide" evidence="2">
    <location>
        <begin position="1"/>
        <end position="20"/>
    </location>
</feature>
<feature type="chain" id="PRO_5000220959" description="Probable pectin lyase A">
    <location>
        <begin position="21"/>
        <end position="379"/>
    </location>
</feature>
<feature type="active site" evidence="2">
    <location>
        <position position="256"/>
    </location>
</feature>
<feature type="glycosylation site" description="N-linked (GlcNAc...) asparagine" evidence="2">
    <location>
        <position position="129"/>
    </location>
</feature>
<feature type="disulfide bond" evidence="1">
    <location>
        <begin position="83"/>
        <end position="102"/>
    </location>
</feature>
<feature type="disulfide bond" evidence="1">
    <location>
        <begin position="92"/>
        <end position="226"/>
    </location>
</feature>
<feature type="disulfide bond" evidence="1">
    <location>
        <begin position="322"/>
        <end position="330"/>
    </location>
</feature>
<accession>A2R3I1</accession>
<organism>
    <name type="scientific">Aspergillus niger (strain ATCC MYA-4892 / CBS 513.88 / FGSC A1513)</name>
    <dbReference type="NCBI Taxonomy" id="425011"/>
    <lineage>
        <taxon>Eukaryota</taxon>
        <taxon>Fungi</taxon>
        <taxon>Dikarya</taxon>
        <taxon>Ascomycota</taxon>
        <taxon>Pezizomycotina</taxon>
        <taxon>Eurotiomycetes</taxon>
        <taxon>Eurotiomycetidae</taxon>
        <taxon>Eurotiales</taxon>
        <taxon>Aspergillaceae</taxon>
        <taxon>Aspergillus</taxon>
        <taxon>Aspergillus subgen. Circumdati</taxon>
    </lineage>
</organism>
<sequence>MKYSTIFSAAAAVFAGSAAAVGVSGSAEGFAEGVTGGGDATPVYPDTIDELVSYLGDDEARVIVLTKTFDFTDSEGTTTGTGCAPWGTASACQVAIDQDDWCENYEPDAPSISVEYYNAGVLGITVTSNKSLIGEGSSGAIKGKGLRIVSGAENIIIQNIAVTDINPKYVWGGDAITLDDCDLVWIDHVTTARIGRQHYVLGTSADNRVSLTNNYIDGVSDYSATCDGYHYWGIYLDGDADLVTMKGNYIYHTSGRSPKVQDNTLLHCVNNYFYDISGHAFEIGEGGYVLAEGNVFQNVDTVLETYEGAAFTVPSTTAGEVCSTYLGRDCVINGFGSSGTFSEDSTSFLSDFEGKNIASASAYTSVASSVVANAGQGNL</sequence>
<dbReference type="EC" id="4.2.2.10"/>
<dbReference type="EMBL" id="AM270321">
    <property type="protein sequence ID" value="CAK48529.1"/>
    <property type="molecule type" value="Genomic_DNA"/>
</dbReference>
<dbReference type="RefSeq" id="XP_001401061.1">
    <property type="nucleotide sequence ID" value="XM_001401024.2"/>
</dbReference>
<dbReference type="SMR" id="A2R3I1"/>
<dbReference type="CAZy" id="PL1">
    <property type="family name" value="Polysaccharide Lyase Family 1"/>
</dbReference>
<dbReference type="GlyCosmos" id="A2R3I1">
    <property type="glycosylation" value="1 site, No reported glycans"/>
</dbReference>
<dbReference type="EnsemblFungi" id="CAK48529">
    <property type="protein sequence ID" value="CAK48529"/>
    <property type="gene ID" value="An14g04370"/>
</dbReference>
<dbReference type="GeneID" id="4987294"/>
<dbReference type="KEGG" id="ang:An14g04370"/>
<dbReference type="VEuPathDB" id="FungiDB:An14g04370"/>
<dbReference type="HOGENOM" id="CLU_021980_0_1_1"/>
<dbReference type="Proteomes" id="UP000006706">
    <property type="component" value="Chromosome 1R"/>
</dbReference>
<dbReference type="GO" id="GO:0005576">
    <property type="term" value="C:extracellular region"/>
    <property type="evidence" value="ECO:0007669"/>
    <property type="project" value="UniProtKB-SubCell"/>
</dbReference>
<dbReference type="GO" id="GO:0030570">
    <property type="term" value="F:pectate lyase activity"/>
    <property type="evidence" value="ECO:0007669"/>
    <property type="project" value="InterPro"/>
</dbReference>
<dbReference type="GO" id="GO:0047490">
    <property type="term" value="F:pectin lyase activity"/>
    <property type="evidence" value="ECO:0000314"/>
    <property type="project" value="AspGD"/>
</dbReference>
<dbReference type="GO" id="GO:0071555">
    <property type="term" value="P:cell wall organization"/>
    <property type="evidence" value="ECO:0007669"/>
    <property type="project" value="UniProtKB-KW"/>
</dbReference>
<dbReference type="GO" id="GO:0045490">
    <property type="term" value="P:pectin catabolic process"/>
    <property type="evidence" value="ECO:0000314"/>
    <property type="project" value="AspGD"/>
</dbReference>
<dbReference type="FunFam" id="2.160.20.10:FF:000003">
    <property type="entry name" value="Pectin lyase F"/>
    <property type="match status" value="1"/>
</dbReference>
<dbReference type="Gene3D" id="2.160.20.10">
    <property type="entry name" value="Single-stranded right-handed beta-helix, Pectin lyase-like"/>
    <property type="match status" value="1"/>
</dbReference>
<dbReference type="InterPro" id="IPR002022">
    <property type="entry name" value="Pec_lyase"/>
</dbReference>
<dbReference type="InterPro" id="IPR012334">
    <property type="entry name" value="Pectin_lyas_fold"/>
</dbReference>
<dbReference type="InterPro" id="IPR011050">
    <property type="entry name" value="Pectin_lyase_fold/virulence"/>
</dbReference>
<dbReference type="InterPro" id="IPR045032">
    <property type="entry name" value="PEL"/>
</dbReference>
<dbReference type="PANTHER" id="PTHR31683">
    <property type="entry name" value="PECTATE LYASE 18-RELATED"/>
    <property type="match status" value="1"/>
</dbReference>
<dbReference type="PANTHER" id="PTHR31683:SF16">
    <property type="entry name" value="PECTIN LYASE A-RELATED"/>
    <property type="match status" value="1"/>
</dbReference>
<dbReference type="Pfam" id="PF00544">
    <property type="entry name" value="Pectate_lyase_4"/>
    <property type="match status" value="1"/>
</dbReference>
<dbReference type="SMART" id="SM00656">
    <property type="entry name" value="Amb_all"/>
    <property type="match status" value="1"/>
</dbReference>
<dbReference type="SUPFAM" id="SSF51126">
    <property type="entry name" value="Pectin lyase-like"/>
    <property type="match status" value="1"/>
</dbReference>
<protein>
    <recommendedName>
        <fullName>Probable pectin lyase A</fullName>
        <shortName>PLA</shortName>
        <ecNumber>4.2.2.10</ecNumber>
    </recommendedName>
</protein>
<name>PELA_ASPNC</name>
<keyword id="KW-0119">Carbohydrate metabolism</keyword>
<keyword id="KW-0961">Cell wall biogenesis/degradation</keyword>
<keyword id="KW-1015">Disulfide bond</keyword>
<keyword id="KW-0325">Glycoprotein</keyword>
<keyword id="KW-0456">Lyase</keyword>
<keyword id="KW-0624">Polysaccharide degradation</keyword>
<keyword id="KW-1185">Reference proteome</keyword>
<keyword id="KW-0964">Secreted</keyword>
<keyword id="KW-0732">Signal</keyword>
<evidence type="ECO:0000250" key="1"/>
<evidence type="ECO:0000255" key="2"/>
<evidence type="ECO:0000305" key="3"/>
<reference key="1">
    <citation type="journal article" date="2007" name="Nat. Biotechnol.">
        <title>Genome sequencing and analysis of the versatile cell factory Aspergillus niger CBS 513.88.</title>
        <authorList>
            <person name="Pel H.J."/>
            <person name="de Winde J.H."/>
            <person name="Archer D.B."/>
            <person name="Dyer P.S."/>
            <person name="Hofmann G."/>
            <person name="Schaap P.J."/>
            <person name="Turner G."/>
            <person name="de Vries R.P."/>
            <person name="Albang R."/>
            <person name="Albermann K."/>
            <person name="Andersen M.R."/>
            <person name="Bendtsen J.D."/>
            <person name="Benen J.A.E."/>
            <person name="van den Berg M."/>
            <person name="Breestraat S."/>
            <person name="Caddick M.X."/>
            <person name="Contreras R."/>
            <person name="Cornell M."/>
            <person name="Coutinho P.M."/>
            <person name="Danchin E.G.J."/>
            <person name="Debets A.J.M."/>
            <person name="Dekker P."/>
            <person name="van Dijck P.W.M."/>
            <person name="van Dijk A."/>
            <person name="Dijkhuizen L."/>
            <person name="Driessen A.J.M."/>
            <person name="d'Enfert C."/>
            <person name="Geysens S."/>
            <person name="Goosen C."/>
            <person name="Groot G.S.P."/>
            <person name="de Groot P.W.J."/>
            <person name="Guillemette T."/>
            <person name="Henrissat B."/>
            <person name="Herweijer M."/>
            <person name="van den Hombergh J.P.T.W."/>
            <person name="van den Hondel C.A.M.J.J."/>
            <person name="van der Heijden R.T.J.M."/>
            <person name="van der Kaaij R.M."/>
            <person name="Klis F.M."/>
            <person name="Kools H.J."/>
            <person name="Kubicek C.P."/>
            <person name="van Kuyk P.A."/>
            <person name="Lauber J."/>
            <person name="Lu X."/>
            <person name="van der Maarel M.J.E.C."/>
            <person name="Meulenberg R."/>
            <person name="Menke H."/>
            <person name="Mortimer M.A."/>
            <person name="Nielsen J."/>
            <person name="Oliver S.G."/>
            <person name="Olsthoorn M."/>
            <person name="Pal K."/>
            <person name="van Peij N.N.M.E."/>
            <person name="Ram A.F.J."/>
            <person name="Rinas U."/>
            <person name="Roubos J.A."/>
            <person name="Sagt C.M.J."/>
            <person name="Schmoll M."/>
            <person name="Sun J."/>
            <person name="Ussery D."/>
            <person name="Varga J."/>
            <person name="Vervecken W."/>
            <person name="van de Vondervoort P.J.J."/>
            <person name="Wedler H."/>
            <person name="Woesten H.A.B."/>
            <person name="Zeng A.-P."/>
            <person name="van Ooyen A.J.J."/>
            <person name="Visser J."/>
            <person name="Stam H."/>
        </authorList>
    </citation>
    <scope>NUCLEOTIDE SEQUENCE [LARGE SCALE GENOMIC DNA]</scope>
    <source>
        <strain>ATCC MYA-4892 / CBS 513.88 / FGSC A1513</strain>
    </source>
</reference>